<dbReference type="EMBL" id="Z38102">
    <property type="protein sequence ID" value="CAA86224.1"/>
    <property type="molecule type" value="mRNA"/>
</dbReference>
<dbReference type="EMBL" id="Z46595">
    <property type="protein sequence ID" value="CAA86570.1"/>
    <property type="molecule type" value="mRNA"/>
</dbReference>
<dbReference type="EMBL" id="U32323">
    <property type="protein sequence ID" value="AAB36491.1"/>
    <property type="molecule type" value="Genomic_DNA"/>
</dbReference>
<dbReference type="EMBL" id="U32324">
    <property type="protein sequence ID" value="AAB36492.1"/>
    <property type="molecule type" value="mRNA"/>
</dbReference>
<dbReference type="EMBL" id="BT009864">
    <property type="protein sequence ID" value="AAP88866.1"/>
    <property type="molecule type" value="mRNA"/>
</dbReference>
<dbReference type="EMBL" id="AY532110">
    <property type="protein sequence ID" value="AAS00093.1"/>
    <property type="molecule type" value="Genomic_DNA"/>
</dbReference>
<dbReference type="EMBL" id="AL162231">
    <property type="status" value="NOT_ANNOTATED_CDS"/>
    <property type="molecule type" value="Genomic_DNA"/>
</dbReference>
<dbReference type="EMBL" id="CH471071">
    <property type="protein sequence ID" value="EAW58423.1"/>
    <property type="molecule type" value="Genomic_DNA"/>
</dbReference>
<dbReference type="EMBL" id="BC003110">
    <property type="protein sequence ID" value="AAH03110.1"/>
    <property type="molecule type" value="mRNA"/>
</dbReference>
<dbReference type="CCDS" id="CCDS6567.1">
    <molecule id="Q14626-1"/>
</dbReference>
<dbReference type="PIR" id="I37891">
    <property type="entry name" value="I37891"/>
</dbReference>
<dbReference type="RefSeq" id="NP_001136256.1">
    <molecule id="Q14626-1"/>
    <property type="nucleotide sequence ID" value="NM_001142784.3"/>
</dbReference>
<dbReference type="PDB" id="6O4P">
    <property type="method" value="X-ray"/>
    <property type="resolution" value="3.43 A"/>
    <property type="chains" value="A/B=23-363"/>
</dbReference>
<dbReference type="PDB" id="8DPS">
    <property type="method" value="EM"/>
    <property type="resolution" value="3.47 A"/>
    <property type="chains" value="C/F=23-319"/>
</dbReference>
<dbReference type="PDB" id="8DPT">
    <property type="method" value="EM"/>
    <property type="resolution" value="4.00 A"/>
    <property type="chains" value="C/F=23-319"/>
</dbReference>
<dbReference type="PDB" id="8DPU">
    <property type="method" value="X-ray"/>
    <property type="resolution" value="3.78 A"/>
    <property type="chains" value="C/F/I/L/O/R=23-363"/>
</dbReference>
<dbReference type="PDB" id="8QY4">
    <property type="method" value="EM"/>
    <property type="resolution" value="3.06 A"/>
    <property type="chains" value="B/E=1-422"/>
</dbReference>
<dbReference type="PDBsum" id="6O4P"/>
<dbReference type="PDBsum" id="8DPS"/>
<dbReference type="PDBsum" id="8DPT"/>
<dbReference type="PDBsum" id="8DPU"/>
<dbReference type="PDBsum" id="8QY4"/>
<dbReference type="EMDB" id="EMD-18741"/>
<dbReference type="EMDB" id="EMD-27641"/>
<dbReference type="EMDB" id="EMD-27642"/>
<dbReference type="SASBDB" id="Q14626"/>
<dbReference type="SMR" id="Q14626"/>
<dbReference type="BioGRID" id="109804">
    <property type="interactions" value="2"/>
</dbReference>
<dbReference type="ComplexPortal" id="CPX-9721">
    <property type="entry name" value="Interleukin 11-sIL11RA-IL-6ST receptor-ligand trans-signalling complex"/>
</dbReference>
<dbReference type="ComplexPortal" id="CPX-9781">
    <property type="entry name" value="Interleukin 11-mIL11RA-IL-6ST receptor-ligand complex"/>
</dbReference>
<dbReference type="ComplexPortal" id="CPX-9801">
    <property type="entry name" value="IL11-sIL11RA-sIL-6ST receptor-ligand buffering complex"/>
</dbReference>
<dbReference type="CORUM" id="Q14626"/>
<dbReference type="DIP" id="DIP-3776N"/>
<dbReference type="FunCoup" id="Q14626">
    <property type="interactions" value="467"/>
</dbReference>
<dbReference type="IntAct" id="Q14626">
    <property type="interactions" value="2"/>
</dbReference>
<dbReference type="STRING" id="9606.ENSP00000450565"/>
<dbReference type="ChEMBL" id="CHEMBL2050"/>
<dbReference type="DrugBank" id="DB00038">
    <property type="generic name" value="Oprelvekin"/>
</dbReference>
<dbReference type="DrugCentral" id="Q14626"/>
<dbReference type="GlyCosmos" id="Q14626">
    <property type="glycosylation" value="2 sites, No reported glycans"/>
</dbReference>
<dbReference type="GlyGen" id="Q14626">
    <property type="glycosylation" value="2 sites, 1 N-linked glycan (1 site)"/>
</dbReference>
<dbReference type="iPTMnet" id="Q14626"/>
<dbReference type="PhosphoSitePlus" id="Q14626"/>
<dbReference type="BioMuta" id="IL11RA"/>
<dbReference type="DMDM" id="55976300"/>
<dbReference type="MassIVE" id="Q14626"/>
<dbReference type="PaxDb" id="9606-ENSP00000450565"/>
<dbReference type="PeptideAtlas" id="Q14626"/>
<dbReference type="ProteomicsDB" id="60076">
    <molecule id="Q14626-1"/>
</dbReference>
<dbReference type="ProteomicsDB" id="60077">
    <molecule id="Q14626-2"/>
</dbReference>
<dbReference type="Antibodypedia" id="25597">
    <property type="antibodies" value="349 antibodies from 34 providers"/>
</dbReference>
<dbReference type="DNASU" id="3590"/>
<dbReference type="Ensembl" id="ENST00000318041.13">
    <molecule id="Q14626-1"/>
    <property type="protein sequence ID" value="ENSP00000326500.8"/>
    <property type="gene ID" value="ENSG00000137070.19"/>
</dbReference>
<dbReference type="Ensembl" id="ENST00000441545.7">
    <molecule id="Q14626-1"/>
    <property type="protein sequence ID" value="ENSP00000394391.3"/>
    <property type="gene ID" value="ENSG00000137070.19"/>
</dbReference>
<dbReference type="Ensembl" id="ENST00000555981.6">
    <molecule id="Q14626-1"/>
    <property type="protein sequence ID" value="ENSP00000450640.2"/>
    <property type="gene ID" value="ENSG00000137070.19"/>
</dbReference>
<dbReference type="Ensembl" id="ENST00000602473.5">
    <molecule id="Q14626-2"/>
    <property type="protein sequence ID" value="ENSP00000473647.1"/>
    <property type="gene ID" value="ENSG00000137070.19"/>
</dbReference>
<dbReference type="Ensembl" id="ENST00000690286.1">
    <molecule id="Q14626-1"/>
    <property type="protein sequence ID" value="ENSP00000509204.1"/>
    <property type="gene ID" value="ENSG00000137070.19"/>
</dbReference>
<dbReference type="GeneID" id="3590"/>
<dbReference type="KEGG" id="hsa:3590"/>
<dbReference type="MANE-Select" id="ENST00000441545.7">
    <property type="protein sequence ID" value="ENSP00000394391.3"/>
    <property type="RefSeq nucleotide sequence ID" value="NM_001142784.3"/>
    <property type="RefSeq protein sequence ID" value="NP_001136256.1"/>
</dbReference>
<dbReference type="UCSC" id="uc031tdp.2">
    <molecule id="Q14626-1"/>
    <property type="organism name" value="human"/>
</dbReference>
<dbReference type="AGR" id="HGNC:5967"/>
<dbReference type="CTD" id="3590"/>
<dbReference type="DisGeNET" id="3590"/>
<dbReference type="GeneCards" id="IL11RA"/>
<dbReference type="HGNC" id="HGNC:5967">
    <property type="gene designation" value="IL11RA"/>
</dbReference>
<dbReference type="HPA" id="ENSG00000137070">
    <property type="expression patterns" value="Low tissue specificity"/>
</dbReference>
<dbReference type="MalaCards" id="IL11RA"/>
<dbReference type="MIM" id="600939">
    <property type="type" value="gene"/>
</dbReference>
<dbReference type="MIM" id="614188">
    <property type="type" value="phenotype"/>
</dbReference>
<dbReference type="neXtProt" id="NX_Q14626"/>
<dbReference type="OpenTargets" id="ENSG00000137070"/>
<dbReference type="Orphanet" id="284149">
    <property type="disease" value="Craniosynostosis-dental anomalies"/>
</dbReference>
<dbReference type="PharmGKB" id="PA29782"/>
<dbReference type="VEuPathDB" id="HostDB:ENSG00000137070"/>
<dbReference type="eggNOG" id="ENOG502R7G6">
    <property type="taxonomic scope" value="Eukaryota"/>
</dbReference>
<dbReference type="GeneTree" id="ENSGT00940000160904"/>
<dbReference type="HOGENOM" id="CLU_047259_0_1_1"/>
<dbReference type="InParanoid" id="Q14626"/>
<dbReference type="OMA" id="WNFPSSW"/>
<dbReference type="OrthoDB" id="418412at2759"/>
<dbReference type="PAN-GO" id="Q14626">
    <property type="GO annotations" value="6 GO annotations based on evolutionary models"/>
</dbReference>
<dbReference type="PhylomeDB" id="Q14626"/>
<dbReference type="TreeFam" id="TF331210"/>
<dbReference type="PathwayCommons" id="Q14626"/>
<dbReference type="Reactome" id="R-HSA-6788467">
    <property type="pathway name" value="IL-6-type cytokine receptor ligand interactions"/>
</dbReference>
<dbReference type="SignaLink" id="Q14626"/>
<dbReference type="SIGNOR" id="Q14626"/>
<dbReference type="BioGRID-ORCS" id="3590">
    <property type="hits" value="9 hits in 1164 CRISPR screens"/>
</dbReference>
<dbReference type="GeneWiki" id="Interleukin_11_receptor_alpha_subunit"/>
<dbReference type="GenomeRNAi" id="3590"/>
<dbReference type="Pharos" id="Q14626">
    <property type="development level" value="Tclin"/>
</dbReference>
<dbReference type="PRO" id="PR:Q14626"/>
<dbReference type="Proteomes" id="UP000005640">
    <property type="component" value="Chromosome 9"/>
</dbReference>
<dbReference type="RNAct" id="Q14626">
    <property type="molecule type" value="protein"/>
</dbReference>
<dbReference type="Bgee" id="ENSG00000137070">
    <property type="expression patterns" value="Expressed in apex of heart and 159 other cell types or tissues"/>
</dbReference>
<dbReference type="ExpressionAtlas" id="Q14626">
    <property type="expression patterns" value="baseline and differential"/>
</dbReference>
<dbReference type="GO" id="GO:0009897">
    <property type="term" value="C:external side of plasma membrane"/>
    <property type="evidence" value="ECO:0000318"/>
    <property type="project" value="GO_Central"/>
</dbReference>
<dbReference type="GO" id="GO:0005576">
    <property type="term" value="C:extracellular region"/>
    <property type="evidence" value="ECO:0007669"/>
    <property type="project" value="UniProtKB-SubCell"/>
</dbReference>
<dbReference type="GO" id="GO:0005886">
    <property type="term" value="C:plasma membrane"/>
    <property type="evidence" value="ECO:0000304"/>
    <property type="project" value="Reactome"/>
</dbReference>
<dbReference type="GO" id="GO:0043235">
    <property type="term" value="C:receptor complex"/>
    <property type="evidence" value="ECO:0000318"/>
    <property type="project" value="GO_Central"/>
</dbReference>
<dbReference type="GO" id="GO:0019970">
    <property type="term" value="F:interleukin-11 binding"/>
    <property type="evidence" value="ECO:0000318"/>
    <property type="project" value="GO_Central"/>
</dbReference>
<dbReference type="GO" id="GO:0004921">
    <property type="term" value="F:interleukin-11 receptor activity"/>
    <property type="evidence" value="ECO:0000314"/>
    <property type="project" value="UniProt"/>
</dbReference>
<dbReference type="GO" id="GO:0004888">
    <property type="term" value="F:transmembrane signaling receptor activity"/>
    <property type="evidence" value="ECO:0000304"/>
    <property type="project" value="ProtInc"/>
</dbReference>
<dbReference type="GO" id="GO:0019221">
    <property type="term" value="P:cytokine-mediated signaling pathway"/>
    <property type="evidence" value="ECO:0000318"/>
    <property type="project" value="GO_Central"/>
</dbReference>
<dbReference type="GO" id="GO:0032502">
    <property type="term" value="P:developmental process"/>
    <property type="evidence" value="ECO:0000315"/>
    <property type="project" value="UniProtKB"/>
</dbReference>
<dbReference type="GO" id="GO:0007566">
    <property type="term" value="P:embryo implantation"/>
    <property type="evidence" value="ECO:0007669"/>
    <property type="project" value="Ensembl"/>
</dbReference>
<dbReference type="GO" id="GO:0060322">
    <property type="term" value="P:head development"/>
    <property type="evidence" value="ECO:0000315"/>
    <property type="project" value="UniProtKB"/>
</dbReference>
<dbReference type="GO" id="GO:0038154">
    <property type="term" value="P:interleukin-11-mediated signaling pathway"/>
    <property type="evidence" value="ECO:0000314"/>
    <property type="project" value="UniProt"/>
</dbReference>
<dbReference type="GO" id="GO:0008284">
    <property type="term" value="P:positive regulation of cell population proliferation"/>
    <property type="evidence" value="ECO:0000318"/>
    <property type="project" value="GO_Central"/>
</dbReference>
<dbReference type="CDD" id="cd00063">
    <property type="entry name" value="FN3"/>
    <property type="match status" value="1"/>
</dbReference>
<dbReference type="FunFam" id="2.60.40.10:FF:004841">
    <property type="match status" value="1"/>
</dbReference>
<dbReference type="FunFam" id="2.60.40.10:FF:000136">
    <property type="entry name" value="Ciliary neurotrophic factor receptor alpha"/>
    <property type="match status" value="1"/>
</dbReference>
<dbReference type="FunFam" id="2.60.40.10:FF:000545">
    <property type="entry name" value="Interleukin-11 receptor subunit alpha"/>
    <property type="match status" value="1"/>
</dbReference>
<dbReference type="Gene3D" id="2.60.40.10">
    <property type="entry name" value="Immunoglobulins"/>
    <property type="match status" value="3"/>
</dbReference>
<dbReference type="InterPro" id="IPR003961">
    <property type="entry name" value="FN3_dom"/>
</dbReference>
<dbReference type="InterPro" id="IPR036116">
    <property type="entry name" value="FN3_sf"/>
</dbReference>
<dbReference type="InterPro" id="IPR003530">
    <property type="entry name" value="Hematopoietin_rcpt_L_F3_CS"/>
</dbReference>
<dbReference type="InterPro" id="IPR007110">
    <property type="entry name" value="Ig-like_dom"/>
</dbReference>
<dbReference type="InterPro" id="IPR036179">
    <property type="entry name" value="Ig-like_dom_sf"/>
</dbReference>
<dbReference type="InterPro" id="IPR013783">
    <property type="entry name" value="Ig-like_fold"/>
</dbReference>
<dbReference type="InterPro" id="IPR003599">
    <property type="entry name" value="Ig_sub"/>
</dbReference>
<dbReference type="InterPro" id="IPR053073">
    <property type="entry name" value="IL11/IL27_subunit_beta"/>
</dbReference>
<dbReference type="PANTHER" id="PTHR48483">
    <property type="entry name" value="INTERLEUKIN-27 SUBUNIT BETA"/>
    <property type="match status" value="1"/>
</dbReference>
<dbReference type="PANTHER" id="PTHR48483:SF2">
    <property type="entry name" value="INTERLEUKIN-27 SUBUNIT BETA"/>
    <property type="match status" value="1"/>
</dbReference>
<dbReference type="SMART" id="SM00060">
    <property type="entry name" value="FN3"/>
    <property type="match status" value="2"/>
</dbReference>
<dbReference type="SMART" id="SM00409">
    <property type="entry name" value="IG"/>
    <property type="match status" value="1"/>
</dbReference>
<dbReference type="SUPFAM" id="SSF49265">
    <property type="entry name" value="Fibronectin type III"/>
    <property type="match status" value="2"/>
</dbReference>
<dbReference type="SUPFAM" id="SSF48726">
    <property type="entry name" value="Immunoglobulin"/>
    <property type="match status" value="1"/>
</dbReference>
<dbReference type="PROSITE" id="PS50853">
    <property type="entry name" value="FN3"/>
    <property type="match status" value="2"/>
</dbReference>
<dbReference type="PROSITE" id="PS01354">
    <property type="entry name" value="HEMATOPO_REC_L_F3"/>
    <property type="match status" value="1"/>
</dbReference>
<dbReference type="PROSITE" id="PS50835">
    <property type="entry name" value="IG_LIKE"/>
    <property type="match status" value="1"/>
</dbReference>
<comment type="function">
    <text evidence="6 13">Receptor for interleukin-11 (IL11). The receptor systems for IL6, LIF, OSM, CNTF, IL11 and CT1 can utilize IL6ST for initiating signal transmission. The IL11/IL11RA/IL6ST complex may be involved in the control of proliferation and/or differentiation of skeletogenic progenitor or other mesenchymal cells (Probable). Essential for the normal development of craniofacial bones and teeth. Restricts suture fusion and tooth number.</text>
</comment>
<comment type="function">
    <molecule>Soluble interleukin-11 receptor subunit alpha</molecule>
    <text evidence="7 8">Soluble form of IL11 receptor (sIL11RA) that acts as an agonist of IL11 activity (PubMed:26876177, PubMed:30279168). The IL11:sIL11RA complex binds to IL6ST/gp130 on cell surfaces and induces signaling also on cells that do not express membrane-bound IL11RA in a process called IL11 trans-signaling (PubMed:26876177, PubMed:30279168).</text>
</comment>
<comment type="function">
    <molecule>Isoform HCR2</molecule>
    <text evidence="7 8">Soluble form of IL11 receptor (sIL11RA) that acts as an agonist of IL11 activity (PubMed:26876177, PubMed:30279168). The IL11:sIL11RA complex binds to IL6ST/gp130 on cell surfaces and induces signaling also on cells that do not express membrane-bound IL11RA in a process called IL11 trans-signaling (PubMed:26876177, PubMed:30279168).</text>
</comment>
<comment type="subunit">
    <text evidence="14 15">On IL11 binding, forms a multimer complex with IL6ST/gp130.</text>
</comment>
<comment type="interaction">
    <interactant intactId="EBI-13638581">
        <id>Q14626</id>
    </interactant>
    <interactant intactId="EBI-2804156">
        <id>Q6UX06</id>
        <label>OLFM4</label>
    </interactant>
    <organismsDiffer>false</organismsDiffer>
    <experiments>3</experiments>
</comment>
<comment type="subcellular location">
    <molecule>Interleukin-11 receptor subunit alpha</molecule>
    <subcellularLocation>
        <location evidence="7">Membrane</location>
        <topology evidence="1">Single-pass type I membrane protein</topology>
    </subcellularLocation>
</comment>
<comment type="subcellular location">
    <molecule>Soluble interleukin-11 receptor subunit alpha</molecule>
    <subcellularLocation>
        <location evidence="7">Secreted</location>
    </subcellularLocation>
</comment>
<comment type="subcellular location">
    <molecule>Isoform HCR2</molecule>
    <subcellularLocation>
        <location evidence="7">Secreted</location>
    </subcellularLocation>
</comment>
<comment type="alternative products">
    <event type="alternative splicing"/>
    <isoform>
        <id>Q14626-1</id>
        <name evidence="12">HCR1</name>
        <name>Membrane form</name>
        <name evidence="11">mIL11RA</name>
        <sequence type="displayed"/>
    </isoform>
    <isoform>
        <id>Q14626-2</id>
        <name evidence="12">HCR2</name>
        <name>Soluble form</name>
        <name evidence="11">sIL11RA</name>
        <sequence type="described" ref="VSP_011879"/>
    </isoform>
</comment>
<comment type="tissue specificity">
    <text evidence="5 9">Expressed in a number of cell lines, including the myelogenous leukemia cell line K-562, the megakaryocytic leukemia cell line M-07e, the erythroleukemia cell line TF-1, and the osteosarcoma cell lines, MG-63 and SaOS-2 (PubMed:7670098). Also expressed in normal and malignant prostate epithelial cell lines. Expression levels are increased in prostate carcinoma.</text>
</comment>
<comment type="PTM">
    <text evidence="7">A short soluble form is also released from the membrane by proteolysis (PubMed:26876177). The sIL11RA is formed either by limited proteolysis of membrane-bound receptors, a process referred to as ectodomain shedding, or directly secreted from the cells after alternative mRNA splicing (PubMed:26876177). mIL11RA is cleaved by the proteases ADAM10, ELANE and PRTN3 (PubMed:26876177).</text>
</comment>
<comment type="disease" evidence="6">
    <disease id="DI-03259">
        <name>Craniosynostosis and dental anomalies</name>
        <acronym>CRSDA</acronym>
        <description>A disorder characterized by craniosynostosis, maxillary hypoplasia, and dental anomalies, including malocclusion, delayed and ectopic tooth eruption, and/or supernumerary teeth. Some patients also display minor digit anomalies, such as syndactyly and/or clinodactyly.</description>
        <dbReference type="MIM" id="614188"/>
    </disease>
    <text>The disease is caused by variants affecting the gene represented in this entry.</text>
</comment>
<comment type="miscellaneous">
    <molecule>Isoform HCR2</molecule>
    <text evidence="13">Lacks the entire cytoplasmic domain.</text>
</comment>
<comment type="similarity">
    <text evidence="13">Belongs to the type I cytokine receptor family. Type 3 subfamily.</text>
</comment>
<gene>
    <name evidence="16" type="primary">IL11RA</name>
</gene>
<reference key="1">
    <citation type="journal article" date="1995" name="Blood">
        <title>Molecular cloning of two isoforms of a receptor for the human hematopoietic cytokine interleukin-11.</title>
        <authorList>
            <person name="Cherel M."/>
            <person name="Sorel M."/>
            <person name="Lebeau B."/>
            <person name="Dubois S."/>
            <person name="Moreau J.-F."/>
            <person name="Bataille R."/>
            <person name="Minvielle S."/>
            <person name="Jacques Y."/>
        </authorList>
    </citation>
    <scope>NUCLEOTIDE SEQUENCE [MRNA] (ISOFORMS HCR1 AND HCR2)</scope>
    <scope>TISSUE SPECIFICITY</scope>
    <source>
        <tissue>Muscle</tissue>
    </source>
</reference>
<reference key="2">
    <citation type="journal article" date="1996" name="Genomics">
        <title>Molecular cloning and characterization of the human interleukin-11 receptor alpha-chain gene, IL11RA, located on chromosome 9p13.</title>
        <authorList>
            <person name="Van Leuven F."/>
            <person name="Stas L."/>
            <person name="Hilliker C."/>
            <person name="Miyake Y."/>
            <person name="Bilinski P."/>
            <person name="Gossler A."/>
        </authorList>
    </citation>
    <scope>NUCLEOTIDE SEQUENCE [GENOMIC DNA / MRNA] (ISOFORM HCR1)</scope>
</reference>
<reference key="3">
    <citation type="submission" date="2003-08" db="EMBL/GenBank/DDBJ databases">
        <title>Cloning of human full-length CDSs in BD Creator(TM) system donor vector.</title>
        <authorList>
            <person name="Kalnine N."/>
            <person name="Chen X."/>
            <person name="Rolfs A."/>
            <person name="Halleck A."/>
            <person name="Hines L."/>
            <person name="Eisenstein S."/>
            <person name="Koundinya M."/>
            <person name="Raphael J."/>
            <person name="Moreira D."/>
            <person name="Kelley T."/>
            <person name="LaBaer J."/>
            <person name="Lin Y."/>
            <person name="Phelan M."/>
            <person name="Farmer A."/>
        </authorList>
    </citation>
    <scope>NUCLEOTIDE SEQUENCE [LARGE SCALE MRNA] (ISOFORM HCR1)</scope>
</reference>
<reference key="4">
    <citation type="submission" date="2004-01" db="EMBL/GenBank/DDBJ databases">
        <authorList>
            <consortium name="SeattleSNPs variation discovery resource"/>
        </authorList>
    </citation>
    <scope>NUCLEOTIDE SEQUENCE [GENOMIC DNA]</scope>
    <scope>VARIANTS THR-65 AND TRP-395</scope>
</reference>
<reference key="5">
    <citation type="journal article" date="2004" name="Nature">
        <title>DNA sequence and analysis of human chromosome 9.</title>
        <authorList>
            <person name="Humphray S.J."/>
            <person name="Oliver K."/>
            <person name="Hunt A.R."/>
            <person name="Plumb R.W."/>
            <person name="Loveland J.E."/>
            <person name="Howe K.L."/>
            <person name="Andrews T.D."/>
            <person name="Searle S."/>
            <person name="Hunt S.E."/>
            <person name="Scott C.E."/>
            <person name="Jones M.C."/>
            <person name="Ainscough R."/>
            <person name="Almeida J.P."/>
            <person name="Ambrose K.D."/>
            <person name="Ashwell R.I.S."/>
            <person name="Babbage A.K."/>
            <person name="Babbage S."/>
            <person name="Bagguley C.L."/>
            <person name="Bailey J."/>
            <person name="Banerjee R."/>
            <person name="Barker D.J."/>
            <person name="Barlow K.F."/>
            <person name="Bates K."/>
            <person name="Beasley H."/>
            <person name="Beasley O."/>
            <person name="Bird C.P."/>
            <person name="Bray-Allen S."/>
            <person name="Brown A.J."/>
            <person name="Brown J.Y."/>
            <person name="Burford D."/>
            <person name="Burrill W."/>
            <person name="Burton J."/>
            <person name="Carder C."/>
            <person name="Carter N.P."/>
            <person name="Chapman J.C."/>
            <person name="Chen Y."/>
            <person name="Clarke G."/>
            <person name="Clark S.Y."/>
            <person name="Clee C.M."/>
            <person name="Clegg S."/>
            <person name="Collier R.E."/>
            <person name="Corby N."/>
            <person name="Crosier M."/>
            <person name="Cummings A.T."/>
            <person name="Davies J."/>
            <person name="Dhami P."/>
            <person name="Dunn M."/>
            <person name="Dutta I."/>
            <person name="Dyer L.W."/>
            <person name="Earthrowl M.E."/>
            <person name="Faulkner L."/>
            <person name="Fleming C.J."/>
            <person name="Frankish A."/>
            <person name="Frankland J.A."/>
            <person name="French L."/>
            <person name="Fricker D.G."/>
            <person name="Garner P."/>
            <person name="Garnett J."/>
            <person name="Ghori J."/>
            <person name="Gilbert J.G.R."/>
            <person name="Glison C."/>
            <person name="Grafham D.V."/>
            <person name="Gribble S."/>
            <person name="Griffiths C."/>
            <person name="Griffiths-Jones S."/>
            <person name="Grocock R."/>
            <person name="Guy J."/>
            <person name="Hall R.E."/>
            <person name="Hammond S."/>
            <person name="Harley J.L."/>
            <person name="Harrison E.S.I."/>
            <person name="Hart E.A."/>
            <person name="Heath P.D."/>
            <person name="Henderson C.D."/>
            <person name="Hopkins B.L."/>
            <person name="Howard P.J."/>
            <person name="Howden P.J."/>
            <person name="Huckle E."/>
            <person name="Johnson C."/>
            <person name="Johnson D."/>
            <person name="Joy A.A."/>
            <person name="Kay M."/>
            <person name="Keenan S."/>
            <person name="Kershaw J.K."/>
            <person name="Kimberley A.M."/>
            <person name="King A."/>
            <person name="Knights A."/>
            <person name="Laird G.K."/>
            <person name="Langford C."/>
            <person name="Lawlor S."/>
            <person name="Leongamornlert D.A."/>
            <person name="Leversha M."/>
            <person name="Lloyd C."/>
            <person name="Lloyd D.M."/>
            <person name="Lovell J."/>
            <person name="Martin S."/>
            <person name="Mashreghi-Mohammadi M."/>
            <person name="Matthews L."/>
            <person name="McLaren S."/>
            <person name="McLay K.E."/>
            <person name="McMurray A."/>
            <person name="Milne S."/>
            <person name="Nickerson T."/>
            <person name="Nisbett J."/>
            <person name="Nordsiek G."/>
            <person name="Pearce A.V."/>
            <person name="Peck A.I."/>
            <person name="Porter K.M."/>
            <person name="Pandian R."/>
            <person name="Pelan S."/>
            <person name="Phillimore B."/>
            <person name="Povey S."/>
            <person name="Ramsey Y."/>
            <person name="Rand V."/>
            <person name="Scharfe M."/>
            <person name="Sehra H.K."/>
            <person name="Shownkeen R."/>
            <person name="Sims S.K."/>
            <person name="Skuce C.D."/>
            <person name="Smith M."/>
            <person name="Steward C.A."/>
            <person name="Swarbreck D."/>
            <person name="Sycamore N."/>
            <person name="Tester J."/>
            <person name="Thorpe A."/>
            <person name="Tracey A."/>
            <person name="Tromans A."/>
            <person name="Thomas D.W."/>
            <person name="Wall M."/>
            <person name="Wallis J.M."/>
            <person name="West A.P."/>
            <person name="Whitehead S.L."/>
            <person name="Willey D.L."/>
            <person name="Williams S.A."/>
            <person name="Wilming L."/>
            <person name="Wray P.W."/>
            <person name="Young L."/>
            <person name="Ashurst J.L."/>
            <person name="Coulson A."/>
            <person name="Blocker H."/>
            <person name="Durbin R.M."/>
            <person name="Sulston J.E."/>
            <person name="Hubbard T."/>
            <person name="Jackson M.J."/>
            <person name="Bentley D.R."/>
            <person name="Beck S."/>
            <person name="Rogers J."/>
            <person name="Dunham I."/>
        </authorList>
    </citation>
    <scope>NUCLEOTIDE SEQUENCE [LARGE SCALE GENOMIC DNA]</scope>
</reference>
<reference key="6">
    <citation type="submission" date="2005-09" db="EMBL/GenBank/DDBJ databases">
        <authorList>
            <person name="Mural R.J."/>
            <person name="Istrail S."/>
            <person name="Sutton G.G."/>
            <person name="Florea L."/>
            <person name="Halpern A.L."/>
            <person name="Mobarry C.M."/>
            <person name="Lippert R."/>
            <person name="Walenz B."/>
            <person name="Shatkay H."/>
            <person name="Dew I."/>
            <person name="Miller J.R."/>
            <person name="Flanigan M.J."/>
            <person name="Edwards N.J."/>
            <person name="Bolanos R."/>
            <person name="Fasulo D."/>
            <person name="Halldorsson B.V."/>
            <person name="Hannenhalli S."/>
            <person name="Turner R."/>
            <person name="Yooseph S."/>
            <person name="Lu F."/>
            <person name="Nusskern D.R."/>
            <person name="Shue B.C."/>
            <person name="Zheng X.H."/>
            <person name="Zhong F."/>
            <person name="Delcher A.L."/>
            <person name="Huson D.H."/>
            <person name="Kravitz S.A."/>
            <person name="Mouchard L."/>
            <person name="Reinert K."/>
            <person name="Remington K.A."/>
            <person name="Clark A.G."/>
            <person name="Waterman M.S."/>
            <person name="Eichler E.E."/>
            <person name="Adams M.D."/>
            <person name="Hunkapiller M.W."/>
            <person name="Myers E.W."/>
            <person name="Venter J.C."/>
        </authorList>
    </citation>
    <scope>NUCLEOTIDE SEQUENCE [LARGE SCALE GENOMIC DNA]</scope>
</reference>
<reference key="7">
    <citation type="journal article" date="2004" name="Genome Res.">
        <title>The status, quality, and expansion of the NIH full-length cDNA project: the Mammalian Gene Collection (MGC).</title>
        <authorList>
            <consortium name="The MGC Project Team"/>
        </authorList>
    </citation>
    <scope>NUCLEOTIDE SEQUENCE [LARGE SCALE MRNA] (ISOFORM HCR1)</scope>
    <source>
        <tissue>Brain</tissue>
    </source>
</reference>
<reference key="8">
    <citation type="journal article" date="2001" name="Am. J. Pathol.">
        <title>Increased expression of the interleukin-11 receptor and evidence of STAT3 activation in prostate carcinoma.</title>
        <authorList>
            <person name="Campbell C.L."/>
            <person name="Jiang Z."/>
            <person name="Savarese D.M."/>
            <person name="Savarese T.M."/>
        </authorList>
    </citation>
    <scope>TISSUE SPECIFICITY</scope>
</reference>
<reference key="9">
    <citation type="journal article" date="2016" name="Cell Rep.">
        <title>Proteolytic Cleavage Governs Interleukin-11 Trans-signaling.</title>
        <authorList>
            <person name="Lokau J."/>
            <person name="Nitz R."/>
            <person name="Agthe M."/>
            <person name="Monhasery N."/>
            <person name="Aparicio-Siegmund S."/>
            <person name="Schumacher N."/>
            <person name="Wolf J."/>
            <person name="Moeller-Hackbarth K."/>
            <person name="Waetzig G.H."/>
            <person name="Groetzinger J."/>
            <person name="Mueller-Newen G."/>
            <person name="Rose-John S."/>
            <person name="Scheller J."/>
            <person name="Garbers C."/>
        </authorList>
    </citation>
    <scope>FUNCTION (ISOFORM HCR2)</scope>
    <scope>PROTEOLYTIC CLEAVAGE</scope>
    <scope>MUTAGENESIS OF ARG-355</scope>
    <scope>SUBCELLULAR LOCATION</scope>
</reference>
<reference key="10">
    <citation type="journal article" date="2018" name="Sci. Signal.">
        <title>Soluble gp130 prevents interleukin-6 and interleukin-11 cluster signaling but not intracellular autocrine responses.</title>
        <authorList>
            <person name="Lamertz L."/>
            <person name="Rummel F."/>
            <person name="Polz R."/>
            <person name="Baran P."/>
            <person name="Hansen S."/>
            <person name="Waetzig G.H."/>
            <person name="Moll J.M."/>
            <person name="Floss D.M."/>
            <person name="Scheller J."/>
        </authorList>
    </citation>
    <scope>FUNCTION (ISOFORM HCR2)</scope>
</reference>
<reference key="11">
    <citation type="journal article" date="2011" name="Am. J. Hum. Genet.">
        <title>Inactivation of IL11 signaling causes craniosynostosis, delayed tooth eruption, and supernumerary teeth.</title>
        <authorList>
            <person name="Nieminen P."/>
            <person name="Morgan N.V."/>
            <person name="Fenwick A.L."/>
            <person name="Parmanen S."/>
            <person name="Veistinen L."/>
            <person name="Mikkola M.L."/>
            <person name="van der Spek P.J."/>
            <person name="Giraud A."/>
            <person name="Judd L."/>
            <person name="Arte S."/>
            <person name="Brueton L.A."/>
            <person name="Wall S.A."/>
            <person name="Mathijssen I.M."/>
            <person name="Maher E.R."/>
            <person name="Wilkie A.O."/>
            <person name="Kreiborg S."/>
            <person name="Thesleff I."/>
        </authorList>
    </citation>
    <scope>VARIANTS CRSDA ARG-221; CYS-245; TRP-296 AND THR-TRP-SER-308 INS</scope>
    <scope>CHARACTERIZATION OF VARIANT CRSDA TRP-296</scope>
    <scope>FUNCTION</scope>
</reference>
<sequence length="422" mass="45222">MSSSCSGLSRVLVAVATALVSASSPCPQAWGPPGVQYGQPGRSVKLCCPGVTAGDPVSWFRDGEPKLLQGPDSGLGHELVLAQADSTDEGTYICQTLDGALGGTVTLQLGYPPARPVVSCQAADYENFSCTWSPSQISGLPTRYLTSYRKKTVLGADSQRRSPSTGPWPCPQDPLGAARCVVHGAEFWSQYRINVTEVNPLGASTRLLDVSLQSILRPDPPQGLRVESVPGYPRRLRASWTYPASWPCQPHFLLKFRLQYRPAQHPAWSTVEPAGLEEVITDAVAGLPHAVRVSARDFLDAGTWSTWSPEAWGTPSTGTIPKEIPAWGQLHTQPEVEPQVDSPAPPRPSLQPHPRLLDHRDSVEQVAVLASLGILSFLGLVAGALALGLWLRLRRGGKDGSPKPGFLASVIPVDRRPGAPNL</sequence>
<feature type="signal peptide" evidence="1">
    <location>
        <begin position="1"/>
        <end position="22"/>
    </location>
</feature>
<feature type="chain" id="PRO_0000010913" description="Interleukin-11 receptor subunit alpha">
    <location>
        <begin position="23"/>
        <end position="422"/>
    </location>
</feature>
<feature type="chain" id="PRO_0000450688" description="Soluble interleukin-11 receptor subunit alpha">
    <location>
        <begin position="23"/>
        <end status="unknown"/>
    </location>
</feature>
<feature type="topological domain" description="Extracellular" evidence="1">
    <location>
        <begin position="24"/>
        <end position="370"/>
    </location>
</feature>
<feature type="transmembrane region" description="Helical" evidence="1">
    <location>
        <begin position="371"/>
        <end position="391"/>
    </location>
</feature>
<feature type="topological domain" description="Cytoplasmic" evidence="1">
    <location>
        <begin position="392"/>
        <end position="422"/>
    </location>
</feature>
<feature type="domain" description="Ig-like C2-type">
    <location>
        <begin position="27"/>
        <end position="110"/>
    </location>
</feature>
<feature type="domain" description="Fibronectin type-III 1" evidence="3">
    <location>
        <begin position="112"/>
        <end position="219"/>
    </location>
</feature>
<feature type="domain" description="Fibronectin type-III 2" evidence="3">
    <location>
        <begin position="220"/>
        <end position="317"/>
    </location>
</feature>
<feature type="region of interest" description="Disordered" evidence="4">
    <location>
        <begin position="335"/>
        <end position="355"/>
    </location>
</feature>
<feature type="region of interest" description="Disordered" evidence="4">
    <location>
        <begin position="398"/>
        <end position="422"/>
    </location>
</feature>
<feature type="short sequence motif" description="WSXWS motif">
    <location>
        <begin position="304"/>
        <end position="308"/>
    </location>
</feature>
<feature type="compositionally biased region" description="Basic and acidic residues" evidence="4">
    <location>
        <begin position="413"/>
        <end position="422"/>
    </location>
</feature>
<feature type="glycosylation site" description="N-linked (GlcNAc...) asparagine" evidence="1">
    <location>
        <position position="127"/>
    </location>
</feature>
<feature type="glycosylation site" description="N-linked (GlcNAc...) asparagine" evidence="1">
    <location>
        <position position="194"/>
    </location>
</feature>
<feature type="disulfide bond" evidence="2">
    <location>
        <begin position="48"/>
        <end position="94"/>
    </location>
</feature>
<feature type="disulfide bond" evidence="2">
    <location>
        <begin position="120"/>
        <end position="130"/>
    </location>
</feature>
<feature type="disulfide bond" evidence="2">
    <location>
        <begin position="170"/>
        <end position="180"/>
    </location>
</feature>
<feature type="splice variant" id="VSP_011879" description="In isoform HCR2." evidence="12">
    <location>
        <begin position="391"/>
        <end position="422"/>
    </location>
</feature>
<feature type="sequence variant" id="VAR_019821" description="In dbSNP:rs11575589." evidence="10">
    <original>P</original>
    <variation>T</variation>
    <location>
        <position position="65"/>
    </location>
</feature>
<feature type="sequence variant" id="VAR_066666" description="In CRSDA; dbSNP:rs387906785." evidence="6">
    <original>P</original>
    <variation>R</variation>
    <location>
        <position position="221"/>
    </location>
</feature>
<feature type="sequence variant" id="VAR_066667" description="In CRSDA; dbSNP:rs387906786." evidence="6">
    <original>S</original>
    <variation>C</variation>
    <location>
        <position position="245"/>
    </location>
</feature>
<feature type="sequence variant" id="VAR_066668" description="In CRSDA; renders the receptor unable to mediate the IL11 signal; dbSNP:rs387906784." evidence="6">
    <original>R</original>
    <variation>W</variation>
    <location>
        <position position="296"/>
    </location>
</feature>
<feature type="sequence variant" id="VAR_066669" description="In CRSDA.">
    <original>S</original>
    <variation>STWS</variation>
    <location>
        <position position="308"/>
    </location>
</feature>
<feature type="sequence variant" id="VAR_019822" description="In dbSNP:rs11575580." evidence="10">
    <original>R</original>
    <variation>W</variation>
    <location>
        <position position="395"/>
    </location>
</feature>
<feature type="mutagenesis site" description="Decreases proteolyisis by ADAM10." evidence="7">
    <original>R</original>
    <variation>E</variation>
    <location>
        <position position="355"/>
    </location>
</feature>
<feature type="strand" evidence="17">
    <location>
        <begin position="30"/>
        <end position="32"/>
    </location>
</feature>
<feature type="strand" evidence="17">
    <location>
        <begin position="35"/>
        <end position="38"/>
    </location>
</feature>
<feature type="strand" evidence="17">
    <location>
        <begin position="44"/>
        <end position="47"/>
    </location>
</feature>
<feature type="strand" evidence="17">
    <location>
        <begin position="57"/>
        <end position="61"/>
    </location>
</feature>
<feature type="strand" evidence="17">
    <location>
        <begin position="73"/>
        <end position="75"/>
    </location>
</feature>
<feature type="strand" evidence="17">
    <location>
        <begin position="78"/>
        <end position="83"/>
    </location>
</feature>
<feature type="turn" evidence="17">
    <location>
        <begin position="86"/>
        <end position="88"/>
    </location>
</feature>
<feature type="strand" evidence="17">
    <location>
        <begin position="90"/>
        <end position="99"/>
    </location>
</feature>
<feature type="strand" evidence="17">
    <location>
        <begin position="101"/>
        <end position="109"/>
    </location>
</feature>
<feature type="strand" evidence="19">
    <location>
        <begin position="117"/>
        <end position="133"/>
    </location>
</feature>
<feature type="strand" evidence="18">
    <location>
        <begin position="139"/>
        <end position="141"/>
    </location>
</feature>
<feature type="strand" evidence="19">
    <location>
        <begin position="143"/>
        <end position="150"/>
    </location>
</feature>
<feature type="strand" evidence="19">
    <location>
        <begin position="178"/>
        <end position="183"/>
    </location>
</feature>
<feature type="strand" evidence="19">
    <location>
        <begin position="191"/>
        <end position="199"/>
    </location>
</feature>
<feature type="strand" evidence="19">
    <location>
        <begin position="204"/>
        <end position="210"/>
    </location>
</feature>
<feature type="helix" evidence="19">
    <location>
        <begin position="212"/>
        <end position="215"/>
    </location>
</feature>
<feature type="strand" evidence="19">
    <location>
        <begin position="222"/>
        <end position="228"/>
    </location>
</feature>
<feature type="strand" evidence="19">
    <location>
        <begin position="236"/>
        <end position="241"/>
    </location>
</feature>
<feature type="strand" evidence="19">
    <location>
        <begin position="254"/>
        <end position="264"/>
    </location>
</feature>
<feature type="strand" evidence="19">
    <location>
        <begin position="269"/>
        <end position="271"/>
    </location>
</feature>
<feature type="strand" evidence="19">
    <location>
        <begin position="277"/>
        <end position="280"/>
    </location>
</feature>
<feature type="strand" evidence="19">
    <location>
        <begin position="289"/>
        <end position="297"/>
    </location>
</feature>
<feature type="strand" evidence="19">
    <location>
        <begin position="311"/>
        <end position="313"/>
    </location>
</feature>
<proteinExistence type="evidence at protein level"/>
<evidence type="ECO:0000255" key="1"/>
<evidence type="ECO:0000255" key="2">
    <source>
        <dbReference type="PROSITE-ProRule" id="PRU00114"/>
    </source>
</evidence>
<evidence type="ECO:0000255" key="3">
    <source>
        <dbReference type="PROSITE-ProRule" id="PRU00316"/>
    </source>
</evidence>
<evidence type="ECO:0000256" key="4">
    <source>
        <dbReference type="SAM" id="MobiDB-lite"/>
    </source>
</evidence>
<evidence type="ECO:0000269" key="5">
    <source>
    </source>
</evidence>
<evidence type="ECO:0000269" key="6">
    <source>
    </source>
</evidence>
<evidence type="ECO:0000269" key="7">
    <source>
    </source>
</evidence>
<evidence type="ECO:0000269" key="8">
    <source>
    </source>
</evidence>
<evidence type="ECO:0000269" key="9">
    <source>
    </source>
</evidence>
<evidence type="ECO:0000269" key="10">
    <source ref="4"/>
</evidence>
<evidence type="ECO:0000303" key="11">
    <source>
    </source>
</evidence>
<evidence type="ECO:0000303" key="12">
    <source>
    </source>
</evidence>
<evidence type="ECO:0000305" key="13"/>
<evidence type="ECO:0000305" key="14">
    <source>
    </source>
</evidence>
<evidence type="ECO:0000305" key="15">
    <source>
    </source>
</evidence>
<evidence type="ECO:0000312" key="16">
    <source>
        <dbReference type="HGNC" id="HGNC:5967"/>
    </source>
</evidence>
<evidence type="ECO:0007829" key="17">
    <source>
        <dbReference type="PDB" id="6O4P"/>
    </source>
</evidence>
<evidence type="ECO:0007829" key="18">
    <source>
        <dbReference type="PDB" id="8DPS"/>
    </source>
</evidence>
<evidence type="ECO:0007829" key="19">
    <source>
        <dbReference type="PDB" id="8QY4"/>
    </source>
</evidence>
<accession>Q14626</accession>
<accession>Q16542</accession>
<accession>Q5VZ80</accession>
<accession>Q7KYJ7</accession>
<name>I11RA_HUMAN</name>
<keyword id="KW-0002">3D-structure</keyword>
<keyword id="KW-0025">Alternative splicing</keyword>
<keyword id="KW-0989">Craniosynostosis</keyword>
<keyword id="KW-0225">Disease variant</keyword>
<keyword id="KW-1015">Disulfide bond</keyword>
<keyword id="KW-0325">Glycoprotein</keyword>
<keyword id="KW-0393">Immunoglobulin domain</keyword>
<keyword id="KW-0472">Membrane</keyword>
<keyword id="KW-1267">Proteomics identification</keyword>
<keyword id="KW-0675">Receptor</keyword>
<keyword id="KW-1185">Reference proteome</keyword>
<keyword id="KW-0677">Repeat</keyword>
<keyword id="KW-0964">Secreted</keyword>
<keyword id="KW-0732">Signal</keyword>
<keyword id="KW-0812">Transmembrane</keyword>
<keyword id="KW-1133">Transmembrane helix</keyword>
<protein>
    <recommendedName>
        <fullName evidence="13">Interleukin-11 receptor subunit alpha</fullName>
        <shortName>IL-11 receptor subunit alpha</shortName>
        <shortName>IL-11R subunit alpha</shortName>
        <shortName>IL-11R-alpha</shortName>
        <shortName>IL-11RA</shortName>
    </recommendedName>
    <component>
        <recommendedName>
            <fullName evidence="13">Soluble interleukin-11 receptor subunit alpha</fullName>
            <shortName evidence="11">sIL-11R</shortName>
            <shortName>sIL-11RA</shortName>
            <shortName evidence="13">sIL11RA</shortName>
        </recommendedName>
    </component>
</protein>
<organism>
    <name type="scientific">Homo sapiens</name>
    <name type="common">Human</name>
    <dbReference type="NCBI Taxonomy" id="9606"/>
    <lineage>
        <taxon>Eukaryota</taxon>
        <taxon>Metazoa</taxon>
        <taxon>Chordata</taxon>
        <taxon>Craniata</taxon>
        <taxon>Vertebrata</taxon>
        <taxon>Euteleostomi</taxon>
        <taxon>Mammalia</taxon>
        <taxon>Eutheria</taxon>
        <taxon>Euarchontoglires</taxon>
        <taxon>Primates</taxon>
        <taxon>Haplorrhini</taxon>
        <taxon>Catarrhini</taxon>
        <taxon>Hominidae</taxon>
        <taxon>Homo</taxon>
    </lineage>
</organism>